<proteinExistence type="evidence at protein level"/>
<dbReference type="EMBL" id="DS496125">
    <property type="protein sequence ID" value="EDP03452.1"/>
    <property type="molecule type" value="Genomic_DNA"/>
</dbReference>
<dbReference type="RefSeq" id="XP_001692883.1">
    <property type="nucleotide sequence ID" value="XM_001692831.1"/>
</dbReference>
<dbReference type="PDB" id="6U42">
    <property type="method" value="EM"/>
    <property type="resolution" value="3.40 A"/>
    <property type="chains" value="5H/5I/5J/5K=1-137"/>
</dbReference>
<dbReference type="PDB" id="6VE7">
    <property type="method" value="EM"/>
    <property type="resolution" value="3.60 A"/>
    <property type="chains" value="H=1-137"/>
</dbReference>
<dbReference type="PDB" id="8GLV">
    <property type="method" value="EM"/>
    <property type="resolution" value="3.10 A"/>
    <property type="chains" value="5H/5I/5J/5K/Gv/Gw/Gx/OV=1-137"/>
</dbReference>
<dbReference type="PDBsum" id="6U42"/>
<dbReference type="PDBsum" id="6VE7"/>
<dbReference type="PDBsum" id="8GLV"/>
<dbReference type="EMDB" id="EMD-20631"/>
<dbReference type="EMDB" id="EMD-20858"/>
<dbReference type="EMDB" id="EMD-40220"/>
<dbReference type="SMR" id="A8IVJ1"/>
<dbReference type="PaxDb" id="3055-EDP03452"/>
<dbReference type="EnsemblPlants" id="PNW75667">
    <property type="protein sequence ID" value="PNW75667"/>
    <property type="gene ID" value="CHLRE_12g536100v5"/>
</dbReference>
<dbReference type="Gramene" id="PNW75667">
    <property type="protein sequence ID" value="PNW75667"/>
    <property type="gene ID" value="CHLRE_12g536100v5"/>
</dbReference>
<dbReference type="HOGENOM" id="CLU_2124208_0_0_1"/>
<dbReference type="OMA" id="PRWPKEN"/>
<dbReference type="OrthoDB" id="521617at2759"/>
<dbReference type="GO" id="GO:0005737">
    <property type="term" value="C:cytoplasm"/>
    <property type="evidence" value="ECO:0007669"/>
    <property type="project" value="UniProtKB-KW"/>
</dbReference>
<dbReference type="GO" id="GO:0005856">
    <property type="term" value="C:cytoskeleton"/>
    <property type="evidence" value="ECO:0007669"/>
    <property type="project" value="UniProtKB-KW"/>
</dbReference>
<dbReference type="GO" id="GO:0031514">
    <property type="term" value="C:motile cilium"/>
    <property type="evidence" value="ECO:0007669"/>
    <property type="project" value="UniProtKB-KW"/>
</dbReference>
<dbReference type="CDD" id="cd23705">
    <property type="entry name" value="Flattop"/>
    <property type="match status" value="1"/>
</dbReference>
<dbReference type="InterPro" id="IPR038797">
    <property type="entry name" value="Fltp"/>
</dbReference>
<dbReference type="PANTHER" id="PTHR34639">
    <property type="entry name" value="PROTEIN FLATTOP"/>
    <property type="match status" value="1"/>
</dbReference>
<dbReference type="PANTHER" id="PTHR34639:SF1">
    <property type="entry name" value="PROTEIN FLATTOP"/>
    <property type="match status" value="1"/>
</dbReference>
<dbReference type="Pfam" id="PF22611">
    <property type="entry name" value="CFAP126"/>
    <property type="match status" value="1"/>
</dbReference>
<organism>
    <name type="scientific">Chlamydomonas reinhardtii</name>
    <name type="common">Chlamydomonas smithii</name>
    <dbReference type="NCBI Taxonomy" id="3055"/>
    <lineage>
        <taxon>Eukaryota</taxon>
        <taxon>Viridiplantae</taxon>
        <taxon>Chlorophyta</taxon>
        <taxon>core chlorophytes</taxon>
        <taxon>Chlorophyceae</taxon>
        <taxon>CS clade</taxon>
        <taxon>Chlamydomonadales</taxon>
        <taxon>Chlamydomonadaceae</taxon>
        <taxon>Chlamydomonas</taxon>
    </lineage>
</organism>
<feature type="chain" id="PRO_0000432114" description="Protein Flattop homolog">
    <location>
        <begin position="1"/>
        <end position="137"/>
    </location>
</feature>
<protein>
    <recommendedName>
        <fullName evidence="4">Protein Flattop homolog</fullName>
    </recommendedName>
    <alternativeName>
        <fullName evidence="2">Cilia- and flagella-associated protein 126</fullName>
    </alternativeName>
    <alternativeName>
        <fullName evidence="4">Flagellum-associated protein 126</fullName>
    </alternativeName>
</protein>
<evidence type="ECO:0000250" key="1">
    <source>
        <dbReference type="UniProtKB" id="Q5VTH2"/>
    </source>
</evidence>
<evidence type="ECO:0000250" key="2">
    <source>
        <dbReference type="UniProtKB" id="Q6P8X9"/>
    </source>
</evidence>
<evidence type="ECO:0000269" key="3">
    <source>
    </source>
</evidence>
<evidence type="ECO:0000305" key="4"/>
<evidence type="ECO:0000312" key="5">
    <source>
        <dbReference type="EMBL" id="EDP03452.1"/>
    </source>
</evidence>
<accession>A8IVJ1</accession>
<gene>
    <name evidence="2" type="primary">CFAP126</name>
    <name evidence="5" type="synonym">FAP126</name>
    <name evidence="2" type="synonym">FLTP</name>
    <name evidence="5" type="ORF">CHLREDRAFT_190291</name>
</gene>
<reference key="1">
    <citation type="journal article" date="2007" name="Science">
        <title>The Chlamydomonas genome reveals the evolution of key animal and plant functions.</title>
        <authorList>
            <person name="Merchant S.S."/>
            <person name="Prochnik S.E."/>
            <person name="Vallon O."/>
            <person name="Harris E.H."/>
            <person name="Karpowicz S.J."/>
            <person name="Witman G.B."/>
            <person name="Terry A."/>
            <person name="Salamov A."/>
            <person name="Fritz-Laylin L.K."/>
            <person name="Marechal-Drouard L."/>
            <person name="Marshall W.F."/>
            <person name="Qu L.H."/>
            <person name="Nelson D.R."/>
            <person name="Sanderfoot A.A."/>
            <person name="Spalding M.H."/>
            <person name="Kapitonov V.V."/>
            <person name="Ren Q."/>
            <person name="Ferris P."/>
            <person name="Lindquist E."/>
            <person name="Shapiro H."/>
            <person name="Lucas S.M."/>
            <person name="Grimwood J."/>
            <person name="Schmutz J."/>
            <person name="Cardol P."/>
            <person name="Cerutti H."/>
            <person name="Chanfreau G."/>
            <person name="Chen C.L."/>
            <person name="Cognat V."/>
            <person name="Croft M.T."/>
            <person name="Dent R."/>
            <person name="Dutcher S."/>
            <person name="Fernandez E."/>
            <person name="Fukuzawa H."/>
            <person name="Gonzalez-Ballester D."/>
            <person name="Gonzalez-Halphen D."/>
            <person name="Hallmann A."/>
            <person name="Hanikenne M."/>
            <person name="Hippler M."/>
            <person name="Inwood W."/>
            <person name="Jabbari K."/>
            <person name="Kalanon M."/>
            <person name="Kuras R."/>
            <person name="Lefebvre P.A."/>
            <person name="Lemaire S.D."/>
            <person name="Lobanov A.V."/>
            <person name="Lohr M."/>
            <person name="Manuell A."/>
            <person name="Meier I."/>
            <person name="Mets L."/>
            <person name="Mittag M."/>
            <person name="Mittelmeier T."/>
            <person name="Moroney J.V."/>
            <person name="Moseley J."/>
            <person name="Napoli C."/>
            <person name="Nedelcu A.M."/>
            <person name="Niyogi K."/>
            <person name="Novoselov S.V."/>
            <person name="Paulsen I.T."/>
            <person name="Pazour G.J."/>
            <person name="Purton S."/>
            <person name="Ral J.P."/>
            <person name="Riano-Pachon D.M."/>
            <person name="Riekhof W."/>
            <person name="Rymarquis L."/>
            <person name="Schroda M."/>
            <person name="Stern D."/>
            <person name="Umen J."/>
            <person name="Willows R."/>
            <person name="Wilson N."/>
            <person name="Zimmer S.L."/>
            <person name="Allmer J."/>
            <person name="Balk J."/>
            <person name="Bisova K."/>
            <person name="Chen C.J."/>
            <person name="Elias M."/>
            <person name="Gendler K."/>
            <person name="Hauser C."/>
            <person name="Lamb M.R."/>
            <person name="Ledford H."/>
            <person name="Long J.C."/>
            <person name="Minagawa J."/>
            <person name="Page M.D."/>
            <person name="Pan J."/>
            <person name="Pootakham W."/>
            <person name="Roje S."/>
            <person name="Rose A."/>
            <person name="Stahlberg E."/>
            <person name="Terauchi A.M."/>
            <person name="Yang P."/>
            <person name="Ball S."/>
            <person name="Bowler C."/>
            <person name="Dieckmann C.L."/>
            <person name="Gladyshev V.N."/>
            <person name="Green P."/>
            <person name="Jorgensen R."/>
            <person name="Mayfield S."/>
            <person name="Mueller-Roeber B."/>
            <person name="Rajamani S."/>
            <person name="Sayre R.T."/>
            <person name="Brokstein P."/>
            <person name="Dubchak I."/>
            <person name="Goodstein D."/>
            <person name="Hornick L."/>
            <person name="Huang Y.W."/>
            <person name="Jhaveri J."/>
            <person name="Luo Y."/>
            <person name="Martinez D."/>
            <person name="Ngau W.C."/>
            <person name="Otillar B."/>
            <person name="Poliakov A."/>
            <person name="Porter A."/>
            <person name="Szajkowski L."/>
            <person name="Werner G."/>
            <person name="Zhou K."/>
            <person name="Grigoriev I.V."/>
            <person name="Rokhsar D.S."/>
            <person name="Grossman A.R."/>
        </authorList>
    </citation>
    <scope>NUCLEOTIDE SEQUENCE [LARGE SCALE GENOMIC DNA]</scope>
    <source>
        <strain>CC-503</strain>
    </source>
</reference>
<reference key="2">
    <citation type="journal article" date="2005" name="J. Cell Biol.">
        <title>Proteomic analysis of a eukaryotic cilium.</title>
        <authorList>
            <person name="Pazour G.J."/>
            <person name="Agrin N."/>
            <person name="Leszyk J."/>
            <person name="Witman G.B."/>
        </authorList>
    </citation>
    <scope>IDENTIFICATION BY MASS SPECTROMETRY</scope>
    <scope>SUBCELLULAR LOCATION</scope>
    <scope>FUNCTION</scope>
</reference>
<sequence length="137" mass="15415">MSRSYPGEQVEHAFNSKRLKNWEVPAVDKSQAISTSTGTRFGTLQPRSGRTQFIVDDNGHLKSGVPKLEKSAFNFTQTTPVFMDSAPRWPKENPTWPKNMKATMGYKGIQSNYLPTNTVTLKAVEVPGTTERNFNFM</sequence>
<keyword id="KW-0002">3D-structure</keyword>
<keyword id="KW-0966">Cell projection</keyword>
<keyword id="KW-0969">Cilium</keyword>
<keyword id="KW-0963">Cytoplasm</keyword>
<keyword id="KW-0206">Cytoskeleton</keyword>
<keyword id="KW-0282">Flagellum</keyword>
<comment type="function">
    <text evidence="1 2">Microtubule inner protein (MIP) part of the dynein-decorated doublet microtubules (DMTs) in cilia axoneme (By similarity). Acts as a regulator of cilium basal body docking and positioning in mono- and multiciliated cells. Regulates basal body docking and cilia formation in multiciliated lung cells. Regulates kinocilium positioning and stereocilia bundle morphogenesis in the inner ear (By similarity).</text>
</comment>
<comment type="subcellular location">
    <subcellularLocation>
        <location evidence="3">Cytoplasm</location>
        <location evidence="3">Cytoskeleton</location>
        <location evidence="3">Flagellum axoneme</location>
    </subcellularLocation>
</comment>
<comment type="similarity">
    <text evidence="4">Belongs to the Flattop family.</text>
</comment>
<name>FLTOP_CHLRE</name>